<reference key="1">
    <citation type="journal article" date="2005" name="Nat. Biotechnol.">
        <title>The genome sequence of the ethanologenic bacterium Zymomonas mobilis ZM4.</title>
        <authorList>
            <person name="Seo J.-S."/>
            <person name="Chong H."/>
            <person name="Park H.S."/>
            <person name="Yoon K.-O."/>
            <person name="Jung C."/>
            <person name="Kim J.J."/>
            <person name="Hong J.H."/>
            <person name="Kim H."/>
            <person name="Kim J.-H."/>
            <person name="Kil J.-I."/>
            <person name="Park C.J."/>
            <person name="Oh H.-M."/>
            <person name="Lee J.-S."/>
            <person name="Jin S.-J."/>
            <person name="Um H.-W."/>
            <person name="Lee H.-J."/>
            <person name="Oh S.-J."/>
            <person name="Kim J.Y."/>
            <person name="Kang H.L."/>
            <person name="Lee S.Y."/>
            <person name="Lee K.J."/>
            <person name="Kang H.S."/>
        </authorList>
    </citation>
    <scope>NUCLEOTIDE SEQUENCE [LARGE SCALE GENOMIC DNA]</scope>
    <source>
        <strain>ATCC 31821 / ZM4 / CP4</strain>
    </source>
</reference>
<protein>
    <recommendedName>
        <fullName evidence="1">4-hydroxy-3-methylbut-2-enyl diphosphate reductase</fullName>
        <shortName evidence="1">HMBPP reductase</shortName>
        <ecNumber evidence="1">1.17.7.4</ecNumber>
    </recommendedName>
</protein>
<evidence type="ECO:0000255" key="1">
    <source>
        <dbReference type="HAMAP-Rule" id="MF_00191"/>
    </source>
</evidence>
<evidence type="ECO:0000256" key="2">
    <source>
        <dbReference type="SAM" id="MobiDB-lite"/>
    </source>
</evidence>
<gene>
    <name evidence="1" type="primary">ispH</name>
    <name type="synonym">lytB</name>
    <name type="ordered locus">ZMO0875</name>
</gene>
<proteinExistence type="inferred from homology"/>
<organism>
    <name type="scientific">Zymomonas mobilis subsp. mobilis (strain ATCC 31821 / ZM4 / CP4)</name>
    <dbReference type="NCBI Taxonomy" id="264203"/>
    <lineage>
        <taxon>Bacteria</taxon>
        <taxon>Pseudomonadati</taxon>
        <taxon>Pseudomonadota</taxon>
        <taxon>Alphaproteobacteria</taxon>
        <taxon>Sphingomonadales</taxon>
        <taxon>Zymomonadaceae</taxon>
        <taxon>Zymomonas</taxon>
    </lineage>
</organism>
<feature type="chain" id="PRO_0000128905" description="4-hydroxy-3-methylbut-2-enyl diphosphate reductase">
    <location>
        <begin position="1"/>
        <end position="340"/>
    </location>
</feature>
<feature type="region of interest" description="Disordered" evidence="2">
    <location>
        <begin position="317"/>
        <end position="340"/>
    </location>
</feature>
<feature type="compositionally biased region" description="Polar residues" evidence="2">
    <location>
        <begin position="331"/>
        <end position="340"/>
    </location>
</feature>
<feature type="active site" description="Proton donor" evidence="1">
    <location>
        <position position="127"/>
    </location>
</feature>
<feature type="binding site" evidence="1">
    <location>
        <position position="13"/>
    </location>
    <ligand>
        <name>[4Fe-4S] cluster</name>
        <dbReference type="ChEBI" id="CHEBI:49883"/>
    </ligand>
</feature>
<feature type="binding site" evidence="1">
    <location>
        <position position="42"/>
    </location>
    <ligand>
        <name>(2E)-4-hydroxy-3-methylbut-2-enyl diphosphate</name>
        <dbReference type="ChEBI" id="CHEBI:128753"/>
    </ligand>
</feature>
<feature type="binding site" evidence="1">
    <location>
        <position position="42"/>
    </location>
    <ligand>
        <name>dimethylallyl diphosphate</name>
        <dbReference type="ChEBI" id="CHEBI:57623"/>
    </ligand>
</feature>
<feature type="binding site" evidence="1">
    <location>
        <position position="42"/>
    </location>
    <ligand>
        <name>isopentenyl diphosphate</name>
        <dbReference type="ChEBI" id="CHEBI:128769"/>
    </ligand>
</feature>
<feature type="binding site" evidence="1">
    <location>
        <position position="75"/>
    </location>
    <ligand>
        <name>(2E)-4-hydroxy-3-methylbut-2-enyl diphosphate</name>
        <dbReference type="ChEBI" id="CHEBI:128753"/>
    </ligand>
</feature>
<feature type="binding site" evidence="1">
    <location>
        <position position="75"/>
    </location>
    <ligand>
        <name>dimethylallyl diphosphate</name>
        <dbReference type="ChEBI" id="CHEBI:57623"/>
    </ligand>
</feature>
<feature type="binding site" evidence="1">
    <location>
        <position position="75"/>
    </location>
    <ligand>
        <name>isopentenyl diphosphate</name>
        <dbReference type="ChEBI" id="CHEBI:128769"/>
    </ligand>
</feature>
<feature type="binding site" evidence="1">
    <location>
        <position position="97"/>
    </location>
    <ligand>
        <name>[4Fe-4S] cluster</name>
        <dbReference type="ChEBI" id="CHEBI:49883"/>
    </ligand>
</feature>
<feature type="binding site" evidence="1">
    <location>
        <position position="125"/>
    </location>
    <ligand>
        <name>(2E)-4-hydroxy-3-methylbut-2-enyl diphosphate</name>
        <dbReference type="ChEBI" id="CHEBI:128753"/>
    </ligand>
</feature>
<feature type="binding site" evidence="1">
    <location>
        <position position="125"/>
    </location>
    <ligand>
        <name>dimethylallyl diphosphate</name>
        <dbReference type="ChEBI" id="CHEBI:57623"/>
    </ligand>
</feature>
<feature type="binding site" evidence="1">
    <location>
        <position position="125"/>
    </location>
    <ligand>
        <name>isopentenyl diphosphate</name>
        <dbReference type="ChEBI" id="CHEBI:128769"/>
    </ligand>
</feature>
<feature type="binding site" evidence="1">
    <location>
        <position position="165"/>
    </location>
    <ligand>
        <name>(2E)-4-hydroxy-3-methylbut-2-enyl diphosphate</name>
        <dbReference type="ChEBI" id="CHEBI:128753"/>
    </ligand>
</feature>
<feature type="binding site" evidence="1">
    <location>
        <position position="195"/>
    </location>
    <ligand>
        <name>[4Fe-4S] cluster</name>
        <dbReference type="ChEBI" id="CHEBI:49883"/>
    </ligand>
</feature>
<feature type="binding site" evidence="1">
    <location>
        <position position="223"/>
    </location>
    <ligand>
        <name>(2E)-4-hydroxy-3-methylbut-2-enyl diphosphate</name>
        <dbReference type="ChEBI" id="CHEBI:128753"/>
    </ligand>
</feature>
<feature type="binding site" evidence="1">
    <location>
        <position position="223"/>
    </location>
    <ligand>
        <name>dimethylallyl diphosphate</name>
        <dbReference type="ChEBI" id="CHEBI:57623"/>
    </ligand>
</feature>
<feature type="binding site" evidence="1">
    <location>
        <position position="223"/>
    </location>
    <ligand>
        <name>isopentenyl diphosphate</name>
        <dbReference type="ChEBI" id="CHEBI:128769"/>
    </ligand>
</feature>
<feature type="binding site" evidence="1">
    <location>
        <position position="224"/>
    </location>
    <ligand>
        <name>(2E)-4-hydroxy-3-methylbut-2-enyl diphosphate</name>
        <dbReference type="ChEBI" id="CHEBI:128753"/>
    </ligand>
</feature>
<feature type="binding site" evidence="1">
    <location>
        <position position="224"/>
    </location>
    <ligand>
        <name>dimethylallyl diphosphate</name>
        <dbReference type="ChEBI" id="CHEBI:57623"/>
    </ligand>
</feature>
<feature type="binding site" evidence="1">
    <location>
        <position position="224"/>
    </location>
    <ligand>
        <name>isopentenyl diphosphate</name>
        <dbReference type="ChEBI" id="CHEBI:128769"/>
    </ligand>
</feature>
<feature type="binding site" evidence="1">
    <location>
        <position position="225"/>
    </location>
    <ligand>
        <name>(2E)-4-hydroxy-3-methylbut-2-enyl diphosphate</name>
        <dbReference type="ChEBI" id="CHEBI:128753"/>
    </ligand>
</feature>
<feature type="binding site" evidence="1">
    <location>
        <position position="225"/>
    </location>
    <ligand>
        <name>dimethylallyl diphosphate</name>
        <dbReference type="ChEBI" id="CHEBI:57623"/>
    </ligand>
</feature>
<feature type="binding site" evidence="1">
    <location>
        <position position="225"/>
    </location>
    <ligand>
        <name>isopentenyl diphosphate</name>
        <dbReference type="ChEBI" id="CHEBI:128769"/>
    </ligand>
</feature>
<feature type="binding site" evidence="1">
    <location>
        <position position="267"/>
    </location>
    <ligand>
        <name>(2E)-4-hydroxy-3-methylbut-2-enyl diphosphate</name>
        <dbReference type="ChEBI" id="CHEBI:128753"/>
    </ligand>
</feature>
<feature type="binding site" evidence="1">
    <location>
        <position position="267"/>
    </location>
    <ligand>
        <name>dimethylallyl diphosphate</name>
        <dbReference type="ChEBI" id="CHEBI:57623"/>
    </ligand>
</feature>
<feature type="binding site" evidence="1">
    <location>
        <position position="267"/>
    </location>
    <ligand>
        <name>isopentenyl diphosphate</name>
        <dbReference type="ChEBI" id="CHEBI:128769"/>
    </ligand>
</feature>
<dbReference type="EC" id="1.17.7.4" evidence="1"/>
<dbReference type="EMBL" id="AE008692">
    <property type="protein sequence ID" value="AAV89499.1"/>
    <property type="molecule type" value="Genomic_DNA"/>
</dbReference>
<dbReference type="RefSeq" id="WP_011240741.1">
    <property type="nucleotide sequence ID" value="NZ_CP035711.1"/>
</dbReference>
<dbReference type="SMR" id="Q5NP61"/>
<dbReference type="STRING" id="264203.ZMO0875"/>
<dbReference type="GeneID" id="79903970"/>
<dbReference type="KEGG" id="zmo:ZMO0875"/>
<dbReference type="eggNOG" id="COG0761">
    <property type="taxonomic scope" value="Bacteria"/>
</dbReference>
<dbReference type="HOGENOM" id="CLU_027486_1_1_5"/>
<dbReference type="UniPathway" id="UPA00056">
    <property type="reaction ID" value="UER00097"/>
</dbReference>
<dbReference type="UniPathway" id="UPA00059">
    <property type="reaction ID" value="UER00105"/>
</dbReference>
<dbReference type="Proteomes" id="UP000001173">
    <property type="component" value="Chromosome"/>
</dbReference>
<dbReference type="GO" id="GO:0051539">
    <property type="term" value="F:4 iron, 4 sulfur cluster binding"/>
    <property type="evidence" value="ECO:0007669"/>
    <property type="project" value="UniProtKB-UniRule"/>
</dbReference>
<dbReference type="GO" id="GO:0051745">
    <property type="term" value="F:4-hydroxy-3-methylbut-2-enyl diphosphate reductase activity"/>
    <property type="evidence" value="ECO:0007669"/>
    <property type="project" value="UniProtKB-UniRule"/>
</dbReference>
<dbReference type="GO" id="GO:0046872">
    <property type="term" value="F:metal ion binding"/>
    <property type="evidence" value="ECO:0007669"/>
    <property type="project" value="UniProtKB-KW"/>
</dbReference>
<dbReference type="GO" id="GO:0050992">
    <property type="term" value="P:dimethylallyl diphosphate biosynthetic process"/>
    <property type="evidence" value="ECO:0007669"/>
    <property type="project" value="UniProtKB-UniRule"/>
</dbReference>
<dbReference type="GO" id="GO:0019288">
    <property type="term" value="P:isopentenyl diphosphate biosynthetic process, methylerythritol 4-phosphate pathway"/>
    <property type="evidence" value="ECO:0007669"/>
    <property type="project" value="UniProtKB-UniRule"/>
</dbReference>
<dbReference type="GO" id="GO:0016114">
    <property type="term" value="P:terpenoid biosynthetic process"/>
    <property type="evidence" value="ECO:0007669"/>
    <property type="project" value="UniProtKB-UniRule"/>
</dbReference>
<dbReference type="CDD" id="cd13944">
    <property type="entry name" value="lytB_ispH"/>
    <property type="match status" value="1"/>
</dbReference>
<dbReference type="Gene3D" id="3.40.50.11270">
    <property type="match status" value="1"/>
</dbReference>
<dbReference type="Gene3D" id="3.40.1010.20">
    <property type="entry name" value="4-hydroxy-3-methylbut-2-enyl diphosphate reductase, catalytic domain"/>
    <property type="match status" value="2"/>
</dbReference>
<dbReference type="HAMAP" id="MF_00191">
    <property type="entry name" value="IspH"/>
    <property type="match status" value="1"/>
</dbReference>
<dbReference type="InterPro" id="IPR003451">
    <property type="entry name" value="LytB/IspH"/>
</dbReference>
<dbReference type="NCBIfam" id="TIGR00216">
    <property type="entry name" value="ispH_lytB"/>
    <property type="match status" value="1"/>
</dbReference>
<dbReference type="NCBIfam" id="NF002188">
    <property type="entry name" value="PRK01045.1-2"/>
    <property type="match status" value="1"/>
</dbReference>
<dbReference type="NCBIfam" id="NF002190">
    <property type="entry name" value="PRK01045.1-4"/>
    <property type="match status" value="1"/>
</dbReference>
<dbReference type="PANTHER" id="PTHR30426">
    <property type="entry name" value="4-HYDROXY-3-METHYLBUT-2-ENYL DIPHOSPHATE REDUCTASE"/>
    <property type="match status" value="1"/>
</dbReference>
<dbReference type="PANTHER" id="PTHR30426:SF0">
    <property type="entry name" value="4-HYDROXY-3-METHYLBUT-2-ENYL DIPHOSPHATE REDUCTASE"/>
    <property type="match status" value="1"/>
</dbReference>
<dbReference type="Pfam" id="PF02401">
    <property type="entry name" value="LYTB"/>
    <property type="match status" value="1"/>
</dbReference>
<sequence length="340" mass="36504">MIKIILAQPRGFCAGVIRAIEIVDQALDRVGAPVYVRHEIVHNRHVVDTLKAKGAVFVEELSEVPPGEVTVFSAHGVARTVQKEAEERGLPVVDATCPLVNKVHAQGRRYLSHGRTLILIGHAGHPEIEGTLGQIDGPVHLVGSAEQVDSLDIPSDTPVAFITQTTLSVDDTRSVIAALRKKFTDVIGPDTSDICYATQNRQAAVRDLCKQSDLILVVGSPNSSNSNRLREIGLEEGLPSYLIADGSEIDPVWFEGINTVGLTAGASAPEELVQSVITAIRALGPVTVEQLDGVEEKIAFRLPPTLRHLKARNAAHNNLDNKTAASEEADSLSNDTEQEA</sequence>
<accession>Q5NP61</accession>
<name>ISPH_ZYMMO</name>
<comment type="function">
    <text evidence="1">Catalyzes the conversion of 1-hydroxy-2-methyl-2-(E)-butenyl 4-diphosphate (HMBPP) into a mixture of isopentenyl diphosphate (IPP) and dimethylallyl diphosphate (DMAPP). Acts in the terminal step of the DOXP/MEP pathway for isoprenoid precursor biosynthesis.</text>
</comment>
<comment type="catalytic activity">
    <reaction evidence="1">
        <text>isopentenyl diphosphate + 2 oxidized [2Fe-2S]-[ferredoxin] + H2O = (2E)-4-hydroxy-3-methylbut-2-enyl diphosphate + 2 reduced [2Fe-2S]-[ferredoxin] + 2 H(+)</text>
        <dbReference type="Rhea" id="RHEA:24488"/>
        <dbReference type="Rhea" id="RHEA-COMP:10000"/>
        <dbReference type="Rhea" id="RHEA-COMP:10001"/>
        <dbReference type="ChEBI" id="CHEBI:15377"/>
        <dbReference type="ChEBI" id="CHEBI:15378"/>
        <dbReference type="ChEBI" id="CHEBI:33737"/>
        <dbReference type="ChEBI" id="CHEBI:33738"/>
        <dbReference type="ChEBI" id="CHEBI:128753"/>
        <dbReference type="ChEBI" id="CHEBI:128769"/>
        <dbReference type="EC" id="1.17.7.4"/>
    </reaction>
</comment>
<comment type="catalytic activity">
    <reaction evidence="1">
        <text>dimethylallyl diphosphate + 2 oxidized [2Fe-2S]-[ferredoxin] + H2O = (2E)-4-hydroxy-3-methylbut-2-enyl diphosphate + 2 reduced [2Fe-2S]-[ferredoxin] + 2 H(+)</text>
        <dbReference type="Rhea" id="RHEA:24825"/>
        <dbReference type="Rhea" id="RHEA-COMP:10000"/>
        <dbReference type="Rhea" id="RHEA-COMP:10001"/>
        <dbReference type="ChEBI" id="CHEBI:15377"/>
        <dbReference type="ChEBI" id="CHEBI:15378"/>
        <dbReference type="ChEBI" id="CHEBI:33737"/>
        <dbReference type="ChEBI" id="CHEBI:33738"/>
        <dbReference type="ChEBI" id="CHEBI:57623"/>
        <dbReference type="ChEBI" id="CHEBI:128753"/>
        <dbReference type="EC" id="1.17.7.4"/>
    </reaction>
</comment>
<comment type="cofactor">
    <cofactor evidence="1">
        <name>[4Fe-4S] cluster</name>
        <dbReference type="ChEBI" id="CHEBI:49883"/>
    </cofactor>
    <text evidence="1">Binds 1 [4Fe-4S] cluster per subunit.</text>
</comment>
<comment type="pathway">
    <text evidence="1">Isoprenoid biosynthesis; dimethylallyl diphosphate biosynthesis; dimethylallyl diphosphate from (2E)-4-hydroxy-3-methylbutenyl diphosphate: step 1/1.</text>
</comment>
<comment type="pathway">
    <text evidence="1">Isoprenoid biosynthesis; isopentenyl diphosphate biosynthesis via DXP pathway; isopentenyl diphosphate from 1-deoxy-D-xylulose 5-phosphate: step 6/6.</text>
</comment>
<comment type="similarity">
    <text evidence="1">Belongs to the IspH family.</text>
</comment>
<keyword id="KW-0004">4Fe-4S</keyword>
<keyword id="KW-0408">Iron</keyword>
<keyword id="KW-0411">Iron-sulfur</keyword>
<keyword id="KW-0414">Isoprene biosynthesis</keyword>
<keyword id="KW-0479">Metal-binding</keyword>
<keyword id="KW-0560">Oxidoreductase</keyword>
<keyword id="KW-1185">Reference proteome</keyword>